<evidence type="ECO:0000250" key="1"/>
<evidence type="ECO:0000250" key="2">
    <source>
        <dbReference type="UniProtKB" id="Q6NRK1"/>
    </source>
</evidence>
<evidence type="ECO:0000250" key="3">
    <source>
        <dbReference type="UniProtKB" id="Q8VC66"/>
    </source>
</evidence>
<evidence type="ECO:0000250" key="4">
    <source>
        <dbReference type="UniProtKB" id="Q9Y2D8"/>
    </source>
</evidence>
<evidence type="ECO:0000255" key="5"/>
<evidence type="ECO:0000256" key="6">
    <source>
        <dbReference type="SAM" id="MobiDB-lite"/>
    </source>
</evidence>
<evidence type="ECO:0000305" key="7"/>
<proteinExistence type="evidence at transcript level"/>
<name>ADIPB_XENLA</name>
<protein>
    <recommendedName>
        <fullName>Afadin- and alpha-actinin-binding protein B</fullName>
        <shortName>ADIP-B</shortName>
    </recommendedName>
    <alternativeName>
        <fullName>Afadin DIL domain-interacting protein B</fullName>
    </alternativeName>
    <alternativeName>
        <fullName>SSX2-interacting protein B</fullName>
    </alternativeName>
</protein>
<reference key="1">
    <citation type="submission" date="2004-05" db="EMBL/GenBank/DDBJ databases">
        <authorList>
            <consortium name="NIH - Xenopus Gene Collection (XGC) project"/>
        </authorList>
    </citation>
    <scope>NUCLEOTIDE SEQUENCE [LARGE SCALE MRNA]</scope>
    <source>
        <tissue>Ovary</tissue>
    </source>
</reference>
<dbReference type="EMBL" id="BC070587">
    <property type="protein sequence ID" value="AAH70587.1"/>
    <property type="molecule type" value="mRNA"/>
</dbReference>
<dbReference type="RefSeq" id="NP_001084872.1">
    <property type="nucleotide sequence ID" value="NM_001091403.1"/>
</dbReference>
<dbReference type="SMR" id="Q6NRX3"/>
<dbReference type="DNASU" id="431921"/>
<dbReference type="GeneID" id="431921"/>
<dbReference type="KEGG" id="xla:431921"/>
<dbReference type="AGR" id="Xenbase:XB-GENE-17342025"/>
<dbReference type="CTD" id="431921"/>
<dbReference type="Xenbase" id="XB-GENE-17342025">
    <property type="gene designation" value="ssx2ip.L"/>
</dbReference>
<dbReference type="OrthoDB" id="312015at2759"/>
<dbReference type="Proteomes" id="UP000186698">
    <property type="component" value="Chromosome 4L"/>
</dbReference>
<dbReference type="Bgee" id="431921">
    <property type="expression patterns" value="Expressed in egg cell and 18 other cell types or tissues"/>
</dbReference>
<dbReference type="GO" id="GO:0005912">
    <property type="term" value="C:adherens junction"/>
    <property type="evidence" value="ECO:0007669"/>
    <property type="project" value="UniProtKB-SubCell"/>
</dbReference>
<dbReference type="GO" id="GO:0034451">
    <property type="term" value="C:centriolar satellite"/>
    <property type="evidence" value="ECO:0000250"/>
    <property type="project" value="UniProtKB"/>
</dbReference>
<dbReference type="GO" id="GO:0036064">
    <property type="term" value="C:ciliary basal body"/>
    <property type="evidence" value="ECO:0000318"/>
    <property type="project" value="GO_Central"/>
</dbReference>
<dbReference type="GO" id="GO:0005737">
    <property type="term" value="C:cytoplasm"/>
    <property type="evidence" value="ECO:0007669"/>
    <property type="project" value="UniProtKB-KW"/>
</dbReference>
<dbReference type="GO" id="GO:0005874">
    <property type="term" value="C:microtubule"/>
    <property type="evidence" value="ECO:0007669"/>
    <property type="project" value="UniProtKB-KW"/>
</dbReference>
<dbReference type="GO" id="GO:0051011">
    <property type="term" value="F:microtubule minus-end binding"/>
    <property type="evidence" value="ECO:0000250"/>
    <property type="project" value="UniProtKB"/>
</dbReference>
<dbReference type="GO" id="GO:0007155">
    <property type="term" value="P:cell adhesion"/>
    <property type="evidence" value="ECO:0007669"/>
    <property type="project" value="UniProtKB-KW"/>
</dbReference>
<dbReference type="GO" id="GO:0007098">
    <property type="term" value="P:centrosome cycle"/>
    <property type="evidence" value="ECO:0000250"/>
    <property type="project" value="UniProtKB"/>
</dbReference>
<dbReference type="GO" id="GO:0035735">
    <property type="term" value="P:intraciliary transport involved in cilium assembly"/>
    <property type="evidence" value="ECO:0000318"/>
    <property type="project" value="GO_Central"/>
</dbReference>
<dbReference type="InterPro" id="IPR052300">
    <property type="entry name" value="Adhesion_Centrosome_assoc"/>
</dbReference>
<dbReference type="InterPro" id="IPR021622">
    <property type="entry name" value="Afadin/alpha-actinin-bd"/>
</dbReference>
<dbReference type="PANTHER" id="PTHR46507">
    <property type="entry name" value="AFADIN- AND ALPHA-ACTININ-BINDING PROTEIN"/>
    <property type="match status" value="1"/>
</dbReference>
<dbReference type="PANTHER" id="PTHR46507:SF7">
    <property type="entry name" value="AFADIN- AND ALPHA-ACTININ-BINDING PROTEIN A"/>
    <property type="match status" value="1"/>
</dbReference>
<dbReference type="Pfam" id="PF11559">
    <property type="entry name" value="ADIP"/>
    <property type="match status" value="1"/>
</dbReference>
<sequence length="545" mass="63836">MGDWRTISLPESDKILQYSSEIRMSPTSLLSSPSHSAANTLSGIVYNFCTEDNIEQCITYIDQELRTIGFPTVQAVSKNGDGRKLHLVSIVNCIHELLQRNSQNMRSKEEVETQLLKINGDLEHLQSIYQRQKDQMEATRRENCALQERDRQMQCKNRNLLQLLKNEKEEVQKLQNIIASRSTQFNHSVKRKEREYNKLKERLYQLVMDKRDKKISIDVLNYVGRADGKRTSWRTGKTDAKNEEEMYKVLLNDYEQRQKQLMVENAELKKVLQQMKKEMISILSQRKTKEKLDDSIGPVASDIEEDLADSSKENLSELSCEAVREQLVSSIRQQWRILKSHMEKLDNQATPDENGMIARGDHEQELGKLINEIQQCKETIKIQQQLLKQQFSVPRDDTSTLLQDCYLLEDKERLQEEWKLFNEQKKNFEKERRNFTEAAIRLGHEKKAFEEDRAAWLKHQFLNMTVFTDHKNSEEKRAHGVHFSPEQDHCRLHSRTHDRHLASSGDHYQRPRKTLPITPSSKHSLTQRESVAWRDSSISPNGTDF</sequence>
<organism>
    <name type="scientific">Xenopus laevis</name>
    <name type="common">African clawed frog</name>
    <dbReference type="NCBI Taxonomy" id="8355"/>
    <lineage>
        <taxon>Eukaryota</taxon>
        <taxon>Metazoa</taxon>
        <taxon>Chordata</taxon>
        <taxon>Craniata</taxon>
        <taxon>Vertebrata</taxon>
        <taxon>Euteleostomi</taxon>
        <taxon>Amphibia</taxon>
        <taxon>Batrachia</taxon>
        <taxon>Anura</taxon>
        <taxon>Pipoidea</taxon>
        <taxon>Pipidae</taxon>
        <taxon>Xenopodinae</taxon>
        <taxon>Xenopus</taxon>
        <taxon>Xenopus</taxon>
    </lineage>
</organism>
<accession>Q6NRX3</accession>
<gene>
    <name type="primary">ssx2ip-b</name>
    <name type="synonym">ssx2ip</name>
</gene>
<feature type="chain" id="PRO_0000425548" description="Afadin- and alpha-actinin-binding protein B">
    <location>
        <begin position="1"/>
        <end position="545"/>
    </location>
</feature>
<feature type="region of interest" description="Disordered" evidence="6">
    <location>
        <begin position="497"/>
        <end position="545"/>
    </location>
</feature>
<feature type="coiled-coil region" evidence="5">
    <location>
        <begin position="106"/>
        <end position="287"/>
    </location>
</feature>
<feature type="coiled-coil region" evidence="5">
    <location>
        <begin position="358"/>
        <end position="442"/>
    </location>
</feature>
<feature type="compositionally biased region" description="Polar residues" evidence="6">
    <location>
        <begin position="517"/>
        <end position="529"/>
    </location>
</feature>
<feature type="compositionally biased region" description="Polar residues" evidence="6">
    <location>
        <begin position="536"/>
        <end position="545"/>
    </location>
</feature>
<keyword id="KW-0130">Cell adhesion</keyword>
<keyword id="KW-0965">Cell junction</keyword>
<keyword id="KW-0175">Coiled coil</keyword>
<keyword id="KW-0963">Cytoplasm</keyword>
<keyword id="KW-0206">Cytoskeleton</keyword>
<keyword id="KW-0493">Microtubule</keyword>
<keyword id="KW-1185">Reference proteome</keyword>
<comment type="function">
    <text evidence="2 3 4">Belongs to an adhesion system, which plays a role in the organization of homotypic, interneuronal and heterotypic cell-cell adherens junctions (AJs). Involved in cell movement. Acts as a centrosome maturation factor, probably by maintaining the integrity of the pericentriolar material and proper microtubule nucleation at mitotic spindle poles. The function seems to implicate at least in part WRAP73; the SSX2IP:WRAP73 complex is proposed to act as regulator of spindle anchoring at the mitotic centrosome (By similarity).</text>
</comment>
<comment type="subunit">
    <text evidence="2">Interacts with WRAP73.</text>
</comment>
<comment type="subcellular location">
    <subcellularLocation>
        <location evidence="1">Cell junction</location>
        <location evidence="1">Adherens junction</location>
    </subcellularLocation>
    <subcellularLocation>
        <location evidence="1">Cytoplasm</location>
        <location evidence="1">Cytoskeleton</location>
        <location evidence="1">Microtubule organizing center</location>
        <location evidence="1">Centrosome</location>
        <location evidence="1">Centriolar satellite</location>
    </subcellularLocation>
</comment>
<comment type="similarity">
    <text evidence="7">Belongs to the ADIP family.</text>
</comment>